<sequence length="738" mass="82430">MSSSSKDSSFQVETPVQNILETSTNSELQDQVSSPYEPDYNSPVKQAAASISALQTQDDTLFNNVDERTLENKDGNKSDDANFDQVSGIPSGSLEIPILNSATSNIRLTPSDTYNNIPVSDTNNEEISKNIYGAPILESTSSDFQSKDSLSTTQPSVSGGNGSTSQSPPSLDVEQNKPFSISNEPVEQETENSSTKDLQVYDFQTASEHLPEQSLQNTTYYDPSKTYSSVNFEEIEYGKSHEKLDLPYRTTDFIPYSKDLSTSPEAHRTSIYSYSANLPNYYNEHNELHEHHNPQTPSSPESAYSPENLQLNHEAQNVEYLGNNAAEKSLQMNLEDEQRFQQFLKDEESIMSNWYPGQFPSASRLFLGHLNTKSLSKRNLWKVFKIYGPLAQIVLKANYGFVQFFTNEDCARALNAEQGNFVRGQKLHLEISKIQKKYQNQIENMKKGSHVTKSNQYSEMIGNLPYPTSSRKRTRSPLMSKGKSYDRKGSISMSKNFSPDCEILVTEDCPKEFVWGVEKVFQERRLNIHTTCLYRDSNLQVIIKSCIINSVKSIILINAGLAHLGKVSVQVFKDGSSDSEVRCDEYAAVDVMVAASIVHHAKTSLMHSAASSTPSYNGERIVPDVPSPCISTNPNLPALVGSLDSVNLHHLLGFIQNTYSTTSYIPTRVSFNPNDTGGSFGTITSQSQFVVNEMPKNYARDNYEALHSQESRQRSSVAGNKQLQKILEQLAELKQPDF</sequence>
<name>YAS9_SCHPO</name>
<organism>
    <name type="scientific">Schizosaccharomyces pombe (strain 972 / ATCC 24843)</name>
    <name type="common">Fission yeast</name>
    <dbReference type="NCBI Taxonomy" id="284812"/>
    <lineage>
        <taxon>Eukaryota</taxon>
        <taxon>Fungi</taxon>
        <taxon>Dikarya</taxon>
        <taxon>Ascomycota</taxon>
        <taxon>Taphrinomycotina</taxon>
        <taxon>Schizosaccharomycetes</taxon>
        <taxon>Schizosaccharomycetales</taxon>
        <taxon>Schizosaccharomycetaceae</taxon>
        <taxon>Schizosaccharomyces</taxon>
    </lineage>
</organism>
<evidence type="ECO:0000255" key="1">
    <source>
        <dbReference type="PROSITE-ProRule" id="PRU00176"/>
    </source>
</evidence>
<evidence type="ECO:0000256" key="2">
    <source>
        <dbReference type="SAM" id="MobiDB-lite"/>
    </source>
</evidence>
<proteinExistence type="predicted"/>
<reference key="1">
    <citation type="journal article" date="2002" name="Nature">
        <title>The genome sequence of Schizosaccharomyces pombe.</title>
        <authorList>
            <person name="Wood V."/>
            <person name="Gwilliam R."/>
            <person name="Rajandream M.A."/>
            <person name="Lyne M.H."/>
            <person name="Lyne R."/>
            <person name="Stewart A."/>
            <person name="Sgouros J.G."/>
            <person name="Peat N."/>
            <person name="Hayles J."/>
            <person name="Baker S.G."/>
            <person name="Basham D."/>
            <person name="Bowman S."/>
            <person name="Brooks K."/>
            <person name="Brown D."/>
            <person name="Brown S."/>
            <person name="Chillingworth T."/>
            <person name="Churcher C.M."/>
            <person name="Collins M."/>
            <person name="Connor R."/>
            <person name="Cronin A."/>
            <person name="Davis P."/>
            <person name="Feltwell T."/>
            <person name="Fraser A."/>
            <person name="Gentles S."/>
            <person name="Goble A."/>
            <person name="Hamlin N."/>
            <person name="Harris D.E."/>
            <person name="Hidalgo J."/>
            <person name="Hodgson G."/>
            <person name="Holroyd S."/>
            <person name="Hornsby T."/>
            <person name="Howarth S."/>
            <person name="Huckle E.J."/>
            <person name="Hunt S."/>
            <person name="Jagels K."/>
            <person name="James K.D."/>
            <person name="Jones L."/>
            <person name="Jones M."/>
            <person name="Leather S."/>
            <person name="McDonald S."/>
            <person name="McLean J."/>
            <person name="Mooney P."/>
            <person name="Moule S."/>
            <person name="Mungall K.L."/>
            <person name="Murphy L.D."/>
            <person name="Niblett D."/>
            <person name="Odell C."/>
            <person name="Oliver K."/>
            <person name="O'Neil S."/>
            <person name="Pearson D."/>
            <person name="Quail M.A."/>
            <person name="Rabbinowitsch E."/>
            <person name="Rutherford K.M."/>
            <person name="Rutter S."/>
            <person name="Saunders D."/>
            <person name="Seeger K."/>
            <person name="Sharp S."/>
            <person name="Skelton J."/>
            <person name="Simmonds M.N."/>
            <person name="Squares R."/>
            <person name="Squares S."/>
            <person name="Stevens K."/>
            <person name="Taylor K."/>
            <person name="Taylor R.G."/>
            <person name="Tivey A."/>
            <person name="Walsh S.V."/>
            <person name="Warren T."/>
            <person name="Whitehead S."/>
            <person name="Woodward J.R."/>
            <person name="Volckaert G."/>
            <person name="Aert R."/>
            <person name="Robben J."/>
            <person name="Grymonprez B."/>
            <person name="Weltjens I."/>
            <person name="Vanstreels E."/>
            <person name="Rieger M."/>
            <person name="Schaefer M."/>
            <person name="Mueller-Auer S."/>
            <person name="Gabel C."/>
            <person name="Fuchs M."/>
            <person name="Duesterhoeft A."/>
            <person name="Fritzc C."/>
            <person name="Holzer E."/>
            <person name="Moestl D."/>
            <person name="Hilbert H."/>
            <person name="Borzym K."/>
            <person name="Langer I."/>
            <person name="Beck A."/>
            <person name="Lehrach H."/>
            <person name="Reinhardt R."/>
            <person name="Pohl T.M."/>
            <person name="Eger P."/>
            <person name="Zimmermann W."/>
            <person name="Wedler H."/>
            <person name="Wambutt R."/>
            <person name="Purnelle B."/>
            <person name="Goffeau A."/>
            <person name="Cadieu E."/>
            <person name="Dreano S."/>
            <person name="Gloux S."/>
            <person name="Lelaure V."/>
            <person name="Mottier S."/>
            <person name="Galibert F."/>
            <person name="Aves S.J."/>
            <person name="Xiang Z."/>
            <person name="Hunt C."/>
            <person name="Moore K."/>
            <person name="Hurst S.M."/>
            <person name="Lucas M."/>
            <person name="Rochet M."/>
            <person name="Gaillardin C."/>
            <person name="Tallada V.A."/>
            <person name="Garzon A."/>
            <person name="Thode G."/>
            <person name="Daga R.R."/>
            <person name="Cruzado L."/>
            <person name="Jimenez J."/>
            <person name="Sanchez M."/>
            <person name="del Rey F."/>
            <person name="Benito J."/>
            <person name="Dominguez A."/>
            <person name="Revuelta J.L."/>
            <person name="Moreno S."/>
            <person name="Armstrong J."/>
            <person name="Forsburg S.L."/>
            <person name="Cerutti L."/>
            <person name="Lowe T."/>
            <person name="McCombie W.R."/>
            <person name="Paulsen I."/>
            <person name="Potashkin J."/>
            <person name="Shpakovski G.V."/>
            <person name="Ussery D."/>
            <person name="Barrell B.G."/>
            <person name="Nurse P."/>
        </authorList>
    </citation>
    <scope>NUCLEOTIDE SEQUENCE [LARGE SCALE GENOMIC DNA]</scope>
    <source>
        <strain>972 / ATCC 24843</strain>
    </source>
</reference>
<keyword id="KW-1185">Reference proteome</keyword>
<keyword id="KW-0694">RNA-binding</keyword>
<protein>
    <recommendedName>
        <fullName>Uncharacterized RNA-binding protein C3H8.09c</fullName>
    </recommendedName>
</protein>
<dbReference type="EMBL" id="CU329670">
    <property type="protein sequence ID" value="CAA93166.1"/>
    <property type="molecule type" value="Genomic_DNA"/>
</dbReference>
<dbReference type="PIR" id="T38767">
    <property type="entry name" value="T38767"/>
</dbReference>
<dbReference type="SMR" id="Q10145"/>
<dbReference type="BioGRID" id="280052">
    <property type="interactions" value="26"/>
</dbReference>
<dbReference type="FunCoup" id="Q10145">
    <property type="interactions" value="19"/>
</dbReference>
<dbReference type="STRING" id="284812.Q10145"/>
<dbReference type="iPTMnet" id="Q10145"/>
<dbReference type="PaxDb" id="4896-SPAC3H8.09c.1"/>
<dbReference type="EnsemblFungi" id="SPAC3H8.09c.1">
    <property type="protein sequence ID" value="SPAC3H8.09c.1:pep"/>
    <property type="gene ID" value="SPAC3H8.09c"/>
</dbReference>
<dbReference type="KEGG" id="spo:2543638"/>
<dbReference type="PomBase" id="SPAC3H8.09c"/>
<dbReference type="VEuPathDB" id="FungiDB:SPAC3H8.09c"/>
<dbReference type="eggNOG" id="KOG0118">
    <property type="taxonomic scope" value="Eukaryota"/>
</dbReference>
<dbReference type="HOGENOM" id="CLU_376050_0_0_1"/>
<dbReference type="InParanoid" id="Q10145"/>
<dbReference type="Reactome" id="R-SPO-4570464">
    <property type="pathway name" value="SUMOylation of RNA binding proteins"/>
</dbReference>
<dbReference type="Reactome" id="R-SPO-72163">
    <property type="pathway name" value="mRNA Splicing - Major Pathway"/>
</dbReference>
<dbReference type="Reactome" id="R-SPO-72203">
    <property type="pathway name" value="Processing of Capped Intron-Containing Pre-mRNA"/>
</dbReference>
<dbReference type="PRO" id="PR:Q10145"/>
<dbReference type="Proteomes" id="UP000002485">
    <property type="component" value="Chromosome I"/>
</dbReference>
<dbReference type="GO" id="GO:0033620">
    <property type="term" value="C:Mei2 nuclear dot complex"/>
    <property type="evidence" value="ECO:0000314"/>
    <property type="project" value="PomBase"/>
</dbReference>
<dbReference type="GO" id="GO:0005634">
    <property type="term" value="C:nucleus"/>
    <property type="evidence" value="ECO:0007005"/>
    <property type="project" value="PomBase"/>
</dbReference>
<dbReference type="GO" id="GO:0008143">
    <property type="term" value="F:poly(A) binding"/>
    <property type="evidence" value="ECO:0000266"/>
    <property type="project" value="PomBase"/>
</dbReference>
<dbReference type="CDD" id="cd12342">
    <property type="entry name" value="RRM_Nab3p"/>
    <property type="match status" value="1"/>
</dbReference>
<dbReference type="FunFam" id="3.30.70.330:FF:001559">
    <property type="entry name" value="RNA-binding region RNP-1 domain-containing protein"/>
    <property type="match status" value="1"/>
</dbReference>
<dbReference type="Gene3D" id="3.30.70.330">
    <property type="match status" value="1"/>
</dbReference>
<dbReference type="InterPro" id="IPR034167">
    <property type="entry name" value="Nab3_RRM"/>
</dbReference>
<dbReference type="InterPro" id="IPR012677">
    <property type="entry name" value="Nucleotide-bd_a/b_plait_sf"/>
</dbReference>
<dbReference type="InterPro" id="IPR035979">
    <property type="entry name" value="RBD_domain_sf"/>
</dbReference>
<dbReference type="InterPro" id="IPR000504">
    <property type="entry name" value="RRM_dom"/>
</dbReference>
<dbReference type="InterPro" id="IPR051186">
    <property type="entry name" value="RRM_HNRPC/RALY_subfam"/>
</dbReference>
<dbReference type="PANTHER" id="PTHR13968">
    <property type="entry name" value="HETEROGENEOUS NUCLEAR RIBONUCLEOPROTEIN"/>
    <property type="match status" value="1"/>
</dbReference>
<dbReference type="PANTHER" id="PTHR13968:SF26">
    <property type="entry name" value="RRM DOMAIN-CONTAINING PROTEIN"/>
    <property type="match status" value="1"/>
</dbReference>
<dbReference type="Pfam" id="PF00076">
    <property type="entry name" value="RRM_1"/>
    <property type="match status" value="1"/>
</dbReference>
<dbReference type="SMART" id="SM00360">
    <property type="entry name" value="RRM"/>
    <property type="match status" value="1"/>
</dbReference>
<dbReference type="SUPFAM" id="SSF54928">
    <property type="entry name" value="RNA-binding domain, RBD"/>
    <property type="match status" value="1"/>
</dbReference>
<dbReference type="PROSITE" id="PS50102">
    <property type="entry name" value="RRM"/>
    <property type="match status" value="1"/>
</dbReference>
<accession>Q10145</accession>
<feature type="chain" id="PRO_0000082019" description="Uncharacterized RNA-binding protein C3H8.09c">
    <location>
        <begin position="1"/>
        <end position="738"/>
    </location>
</feature>
<feature type="domain" description="RRM" evidence="1">
    <location>
        <begin position="363"/>
        <end position="434"/>
    </location>
</feature>
<feature type="region of interest" description="Disordered" evidence="2">
    <location>
        <begin position="1"/>
        <end position="51"/>
    </location>
</feature>
<feature type="region of interest" description="Disordered" evidence="2">
    <location>
        <begin position="140"/>
        <end position="197"/>
    </location>
</feature>
<feature type="region of interest" description="Disordered" evidence="2">
    <location>
        <begin position="466"/>
        <end position="487"/>
    </location>
</feature>
<feature type="compositionally biased region" description="Polar residues" evidence="2">
    <location>
        <begin position="1"/>
        <end position="34"/>
    </location>
</feature>
<feature type="compositionally biased region" description="Polar residues" evidence="2">
    <location>
        <begin position="140"/>
        <end position="169"/>
    </location>
</feature>
<feature type="compositionally biased region" description="Polar residues" evidence="2">
    <location>
        <begin position="177"/>
        <end position="197"/>
    </location>
</feature>
<gene>
    <name type="ORF">SPAC3H8.09c</name>
</gene>